<evidence type="ECO:0000250" key="1">
    <source>
        <dbReference type="UniProtKB" id="P33442"/>
    </source>
</evidence>
<evidence type="ECO:0000255" key="2">
    <source>
        <dbReference type="HAMAP-Rule" id="MF_03122"/>
    </source>
</evidence>
<evidence type="ECO:0000269" key="3">
    <source>
    </source>
</evidence>
<reference key="1">
    <citation type="journal article" date="2002" name="Nature">
        <title>The genome sequence of Schizosaccharomyces pombe.</title>
        <authorList>
            <person name="Wood V."/>
            <person name="Gwilliam R."/>
            <person name="Rajandream M.A."/>
            <person name="Lyne M.H."/>
            <person name="Lyne R."/>
            <person name="Stewart A."/>
            <person name="Sgouros J.G."/>
            <person name="Peat N."/>
            <person name="Hayles J."/>
            <person name="Baker S.G."/>
            <person name="Basham D."/>
            <person name="Bowman S."/>
            <person name="Brooks K."/>
            <person name="Brown D."/>
            <person name="Brown S."/>
            <person name="Chillingworth T."/>
            <person name="Churcher C.M."/>
            <person name="Collins M."/>
            <person name="Connor R."/>
            <person name="Cronin A."/>
            <person name="Davis P."/>
            <person name="Feltwell T."/>
            <person name="Fraser A."/>
            <person name="Gentles S."/>
            <person name="Goble A."/>
            <person name="Hamlin N."/>
            <person name="Harris D.E."/>
            <person name="Hidalgo J."/>
            <person name="Hodgson G."/>
            <person name="Holroyd S."/>
            <person name="Hornsby T."/>
            <person name="Howarth S."/>
            <person name="Huckle E.J."/>
            <person name="Hunt S."/>
            <person name="Jagels K."/>
            <person name="James K.D."/>
            <person name="Jones L."/>
            <person name="Jones M."/>
            <person name="Leather S."/>
            <person name="McDonald S."/>
            <person name="McLean J."/>
            <person name="Mooney P."/>
            <person name="Moule S."/>
            <person name="Mungall K.L."/>
            <person name="Murphy L.D."/>
            <person name="Niblett D."/>
            <person name="Odell C."/>
            <person name="Oliver K."/>
            <person name="O'Neil S."/>
            <person name="Pearson D."/>
            <person name="Quail M.A."/>
            <person name="Rabbinowitsch E."/>
            <person name="Rutherford K.M."/>
            <person name="Rutter S."/>
            <person name="Saunders D."/>
            <person name="Seeger K."/>
            <person name="Sharp S."/>
            <person name="Skelton J."/>
            <person name="Simmonds M.N."/>
            <person name="Squares R."/>
            <person name="Squares S."/>
            <person name="Stevens K."/>
            <person name="Taylor K."/>
            <person name="Taylor R.G."/>
            <person name="Tivey A."/>
            <person name="Walsh S.V."/>
            <person name="Warren T."/>
            <person name="Whitehead S."/>
            <person name="Woodward J.R."/>
            <person name="Volckaert G."/>
            <person name="Aert R."/>
            <person name="Robben J."/>
            <person name="Grymonprez B."/>
            <person name="Weltjens I."/>
            <person name="Vanstreels E."/>
            <person name="Rieger M."/>
            <person name="Schaefer M."/>
            <person name="Mueller-Auer S."/>
            <person name="Gabel C."/>
            <person name="Fuchs M."/>
            <person name="Duesterhoeft A."/>
            <person name="Fritzc C."/>
            <person name="Holzer E."/>
            <person name="Moestl D."/>
            <person name="Hilbert H."/>
            <person name="Borzym K."/>
            <person name="Langer I."/>
            <person name="Beck A."/>
            <person name="Lehrach H."/>
            <person name="Reinhardt R."/>
            <person name="Pohl T.M."/>
            <person name="Eger P."/>
            <person name="Zimmermann W."/>
            <person name="Wedler H."/>
            <person name="Wambutt R."/>
            <person name="Purnelle B."/>
            <person name="Goffeau A."/>
            <person name="Cadieu E."/>
            <person name="Dreano S."/>
            <person name="Gloux S."/>
            <person name="Lelaure V."/>
            <person name="Mottier S."/>
            <person name="Galibert F."/>
            <person name="Aves S.J."/>
            <person name="Xiang Z."/>
            <person name="Hunt C."/>
            <person name="Moore K."/>
            <person name="Hurst S.M."/>
            <person name="Lucas M."/>
            <person name="Rochet M."/>
            <person name="Gaillardin C."/>
            <person name="Tallada V.A."/>
            <person name="Garzon A."/>
            <person name="Thode G."/>
            <person name="Daga R.R."/>
            <person name="Cruzado L."/>
            <person name="Jimenez J."/>
            <person name="Sanchez M."/>
            <person name="del Rey F."/>
            <person name="Benito J."/>
            <person name="Dominguez A."/>
            <person name="Revuelta J.L."/>
            <person name="Moreno S."/>
            <person name="Armstrong J."/>
            <person name="Forsburg S.L."/>
            <person name="Cerutti L."/>
            <person name="Lowe T."/>
            <person name="McCombie W.R."/>
            <person name="Paulsen I."/>
            <person name="Potashkin J."/>
            <person name="Shpakovski G.V."/>
            <person name="Ussery D."/>
            <person name="Barrell B.G."/>
            <person name="Nurse P."/>
        </authorList>
    </citation>
    <scope>NUCLEOTIDE SEQUENCE [LARGE SCALE GENOMIC DNA]</scope>
    <source>
        <strain>972 / ATCC 24843</strain>
    </source>
</reference>
<reference key="2">
    <citation type="journal article" date="2000" name="Genes Cells">
        <title>Large-scale screening of intracellular protein localization in living fission yeast cells by the use of a GFP-fusion genomic DNA library.</title>
        <authorList>
            <person name="Ding D.-Q."/>
            <person name="Tomita Y."/>
            <person name="Yamamoto A."/>
            <person name="Chikashige Y."/>
            <person name="Haraguchi T."/>
            <person name="Hiraoka Y."/>
        </authorList>
    </citation>
    <scope>NUCLEOTIDE SEQUENCE [LARGE SCALE GENOMIC DNA] OF 1-72</scope>
    <source>
        <strain>ATCC 38364 / 968</strain>
    </source>
</reference>
<reference key="3">
    <citation type="journal article" date="2006" name="Nat. Biotechnol.">
        <title>ORFeome cloning and global analysis of protein localization in the fission yeast Schizosaccharomyces pombe.</title>
        <authorList>
            <person name="Matsuyama A."/>
            <person name="Arai R."/>
            <person name="Yashiroda Y."/>
            <person name="Shirai A."/>
            <person name="Kamata A."/>
            <person name="Sekido S."/>
            <person name="Kobayashi Y."/>
            <person name="Hashimoto A."/>
            <person name="Hamamoto M."/>
            <person name="Hiraoka Y."/>
            <person name="Horinouchi S."/>
            <person name="Yoshida M."/>
        </authorList>
    </citation>
    <scope>SUBCELLULAR LOCATION [LARGE SCALE ANALYSIS]</scope>
</reference>
<organism>
    <name type="scientific">Schizosaccharomyces pombe (strain 972 / ATCC 24843)</name>
    <name type="common">Fission yeast</name>
    <dbReference type="NCBI Taxonomy" id="284812"/>
    <lineage>
        <taxon>Eukaryota</taxon>
        <taxon>Fungi</taxon>
        <taxon>Dikarya</taxon>
        <taxon>Ascomycota</taxon>
        <taxon>Taphrinomycotina</taxon>
        <taxon>Schizosaccharomycetes</taxon>
        <taxon>Schizosaccharomycetales</taxon>
        <taxon>Schizosaccharomycetaceae</taxon>
        <taxon>Schizosaccharomyces</taxon>
    </lineage>
</organism>
<accession>Q09781</accession>
<accession>Q9US76</accession>
<proteinExistence type="inferred from homology"/>
<name>RS3A1_SCHPO</name>
<feature type="initiator methionine" description="Removed" evidence="2">
    <location>
        <position position="1"/>
    </location>
</feature>
<feature type="chain" id="PRO_0000153539" description="Small ribosomal subunit protein eS1A">
    <location>
        <begin position="2"/>
        <end position="252"/>
    </location>
</feature>
<feature type="modified residue" description="N-acetylalanine; partial" evidence="2">
    <location>
        <position position="2"/>
    </location>
</feature>
<sequence>MAVGKNKRLSKGKKGIKKRVVDPFSRKDWYDIKAPAFFEVKNVGKTLVNRTAGLKNANDSLKGRILEVSLADLQKDEEHSFRKVKLRVEDIQGKSCLTSFNGFDMTSDKLRSLVRKWQSTIEANQTIKTTDGYLCRIFVIGFTSRRVNQVKKTTYAQSSQIRAIHQKMFQVIQNQANGCSMKELVQKLIPEVIGRAIEKATNNIYPLQNVFVRKVKILKAPKHDAQKLLELHGESQDVGSKVISDVAPLESV</sequence>
<comment type="function">
    <text evidence="1">Component of the ribosome, a large ribonucleoprotein complex responsible for the synthesis of proteins in the cell. The small ribosomal subunit (SSU) binds messenger RNAs (mRNAs) and translates the encoded message by selecting cognate aminoacyl-transfer RNA (tRNA) molecules. The large subunit (LSU) contains the ribosomal catalytic site termed the peptidyl transferase center (PTC), which catalyzes the formation of peptide bonds, thereby polymerizing the amino acids delivered by tRNAs into a polypeptide chain. The nascent polypeptides leave the ribosome through a tunnel in the LSU and interact with protein factors that function in enzymatic processing, targeting, and the membrane insertion of nascent chains at the exit of the ribosomal tunnel.</text>
</comment>
<comment type="subunit">
    <text evidence="2">Component of the small ribosomal subunit (SSU). Mature yeast ribosomes consist of a small (40S) and a large (60S) subunit. The 40S small subunit contains 1 molecule of ribosomal RNA (18S rRNA) and at least 33 different proteins. The large 60S subunit contains 3 rRNA molecules (25S, 5.8S and 5S rRNA) and at least 46 different proteins. eS1 interacts directly with uS11 and eS26, which form part of the mRNA exit tunnel.</text>
</comment>
<comment type="subcellular location">
    <subcellularLocation>
        <location evidence="2 3">Cytoplasm</location>
    </subcellularLocation>
</comment>
<comment type="miscellaneous">
    <text>There are 2 genes for eS1 in S.pombe.</text>
</comment>
<comment type="similarity">
    <text evidence="2">Belongs to the eukaryotic ribosomal protein eS1 family.</text>
</comment>
<keyword id="KW-0007">Acetylation</keyword>
<keyword id="KW-0963">Cytoplasm</keyword>
<keyword id="KW-1185">Reference proteome</keyword>
<keyword id="KW-0687">Ribonucleoprotein</keyword>
<keyword id="KW-0689">Ribosomal protein</keyword>
<dbReference type="EMBL" id="CU329670">
    <property type="protein sequence ID" value="CAA91095.1"/>
    <property type="molecule type" value="Genomic_DNA"/>
</dbReference>
<dbReference type="EMBL" id="AB027994">
    <property type="protein sequence ID" value="BAA87298.1"/>
    <property type="molecule type" value="Genomic_DNA"/>
</dbReference>
<dbReference type="PIR" id="S62431">
    <property type="entry name" value="S62431"/>
</dbReference>
<dbReference type="RefSeq" id="NP_592828.1">
    <property type="nucleotide sequence ID" value="NM_001018229.2"/>
</dbReference>
<dbReference type="SMR" id="Q09781"/>
<dbReference type="BioGRID" id="279264">
    <property type="interactions" value="33"/>
</dbReference>
<dbReference type="FunCoup" id="Q09781">
    <property type="interactions" value="701"/>
</dbReference>
<dbReference type="IntAct" id="Q09781">
    <property type="interactions" value="1"/>
</dbReference>
<dbReference type="STRING" id="284812.Q09781"/>
<dbReference type="iPTMnet" id="Q09781"/>
<dbReference type="PaxDb" id="4896-SPAC13G6.02c.1"/>
<dbReference type="EnsemblFungi" id="SPAC13G6.02c.1">
    <property type="protein sequence ID" value="SPAC13G6.02c.1:pep"/>
    <property type="gene ID" value="SPAC13G6.02c"/>
</dbReference>
<dbReference type="GeneID" id="2542817"/>
<dbReference type="KEGG" id="spo:2542817"/>
<dbReference type="PomBase" id="SPAC13G6.02c">
    <property type="gene designation" value="rps101"/>
</dbReference>
<dbReference type="VEuPathDB" id="FungiDB:SPAC13G6.02c"/>
<dbReference type="eggNOG" id="KOG1628">
    <property type="taxonomic scope" value="Eukaryota"/>
</dbReference>
<dbReference type="HOGENOM" id="CLU_062507_0_0_1"/>
<dbReference type="InParanoid" id="Q09781"/>
<dbReference type="OMA" id="MCEIITR"/>
<dbReference type="PhylomeDB" id="Q09781"/>
<dbReference type="Reactome" id="R-SPO-156827">
    <property type="pathway name" value="L13a-mediated translational silencing of Ceruloplasmin expression"/>
</dbReference>
<dbReference type="Reactome" id="R-SPO-1799339">
    <property type="pathway name" value="SRP-dependent cotranslational protein targeting to membrane"/>
</dbReference>
<dbReference type="Reactome" id="R-SPO-72649">
    <property type="pathway name" value="Translation initiation complex formation"/>
</dbReference>
<dbReference type="Reactome" id="R-SPO-72689">
    <property type="pathway name" value="Formation of a pool of free 40S subunits"/>
</dbReference>
<dbReference type="Reactome" id="R-SPO-72695">
    <property type="pathway name" value="Formation of the ternary complex, and subsequently, the 43S complex"/>
</dbReference>
<dbReference type="Reactome" id="R-SPO-72702">
    <property type="pathway name" value="Ribosomal scanning and start codon recognition"/>
</dbReference>
<dbReference type="Reactome" id="R-SPO-72706">
    <property type="pathway name" value="GTP hydrolysis and joining of the 60S ribosomal subunit"/>
</dbReference>
<dbReference type="Reactome" id="R-SPO-975956">
    <property type="pathway name" value="Nonsense Mediated Decay (NMD) independent of the Exon Junction Complex (EJC)"/>
</dbReference>
<dbReference type="Reactome" id="R-SPO-975957">
    <property type="pathway name" value="Nonsense Mediated Decay (NMD) enhanced by the Exon Junction Complex (EJC)"/>
</dbReference>
<dbReference type="PRO" id="PR:Q09781"/>
<dbReference type="Proteomes" id="UP000002485">
    <property type="component" value="Chromosome I"/>
</dbReference>
<dbReference type="GO" id="GO:0005829">
    <property type="term" value="C:cytosol"/>
    <property type="evidence" value="ECO:0007005"/>
    <property type="project" value="PomBase"/>
</dbReference>
<dbReference type="GO" id="GO:0022627">
    <property type="term" value="C:cytosolic small ribosomal subunit"/>
    <property type="evidence" value="ECO:0000266"/>
    <property type="project" value="PomBase"/>
</dbReference>
<dbReference type="GO" id="GO:0003735">
    <property type="term" value="F:structural constituent of ribosome"/>
    <property type="evidence" value="ECO:0000266"/>
    <property type="project" value="PomBase"/>
</dbReference>
<dbReference type="GO" id="GO:0002181">
    <property type="term" value="P:cytoplasmic translation"/>
    <property type="evidence" value="ECO:0000266"/>
    <property type="project" value="PomBase"/>
</dbReference>
<dbReference type="GO" id="GO:0042254">
    <property type="term" value="P:ribosome biogenesis"/>
    <property type="evidence" value="ECO:0000266"/>
    <property type="project" value="PomBase"/>
</dbReference>
<dbReference type="HAMAP" id="MF_03122">
    <property type="entry name" value="Ribosomal_eS1_euk"/>
    <property type="match status" value="1"/>
</dbReference>
<dbReference type="InterPro" id="IPR001593">
    <property type="entry name" value="Ribosomal_eS1"/>
</dbReference>
<dbReference type="InterPro" id="IPR018281">
    <property type="entry name" value="Ribosomal_eS1_CS"/>
</dbReference>
<dbReference type="InterPro" id="IPR027500">
    <property type="entry name" value="Ribosomal_eS1_euk"/>
</dbReference>
<dbReference type="PANTHER" id="PTHR11830">
    <property type="entry name" value="40S RIBOSOMAL PROTEIN S3A"/>
    <property type="match status" value="1"/>
</dbReference>
<dbReference type="Pfam" id="PF01015">
    <property type="entry name" value="Ribosomal_S3Ae"/>
    <property type="match status" value="1"/>
</dbReference>
<dbReference type="SMART" id="SM01397">
    <property type="entry name" value="Ribosomal_S3Ae"/>
    <property type="match status" value="1"/>
</dbReference>
<dbReference type="PROSITE" id="PS01191">
    <property type="entry name" value="RIBOSOMAL_S3AE"/>
    <property type="match status" value="1"/>
</dbReference>
<protein>
    <recommendedName>
        <fullName evidence="2">Small ribosomal subunit protein eS1A</fullName>
    </recommendedName>
    <alternativeName>
        <fullName>40S ribosomal protein S1-A</fullName>
    </alternativeName>
    <alternativeName>
        <fullName>S3aE-A</fullName>
    </alternativeName>
</protein>
<gene>
    <name type="primary">rps101</name>
    <name type="synonym">rps1-1</name>
    <name type="synonym">rps3a-1</name>
    <name type="ORF">SPAC13G6.02c</name>
</gene>